<reference key="1">
    <citation type="journal article" date="2008" name="BMC Genomics">
        <title>The genome of Aeromonas salmonicida subsp. salmonicida A449: insights into the evolution of a fish pathogen.</title>
        <authorList>
            <person name="Reith M.E."/>
            <person name="Singh R.K."/>
            <person name="Curtis B."/>
            <person name="Boyd J.M."/>
            <person name="Bouevitch A."/>
            <person name="Kimball J."/>
            <person name="Munholland J."/>
            <person name="Murphy C."/>
            <person name="Sarty D."/>
            <person name="Williams J."/>
            <person name="Nash J.H."/>
            <person name="Johnson S.C."/>
            <person name="Brown L.L."/>
        </authorList>
    </citation>
    <scope>NUCLEOTIDE SEQUENCE [LARGE SCALE GENOMIC DNA]</scope>
    <source>
        <strain>A449</strain>
    </source>
</reference>
<dbReference type="EC" id="2.1.1.190" evidence="1"/>
<dbReference type="EMBL" id="CP000644">
    <property type="protein sequence ID" value="ABO91447.1"/>
    <property type="molecule type" value="Genomic_DNA"/>
</dbReference>
<dbReference type="RefSeq" id="WP_005318865.1">
    <property type="nucleotide sequence ID" value="NC_009348.1"/>
</dbReference>
<dbReference type="SMR" id="A4SRC5"/>
<dbReference type="STRING" id="29491.GCA_000820065_01043"/>
<dbReference type="KEGG" id="asa:ASA_3479"/>
<dbReference type="PATRIC" id="fig|382245.13.peg.3467"/>
<dbReference type="eggNOG" id="COG2265">
    <property type="taxonomic scope" value="Bacteria"/>
</dbReference>
<dbReference type="HOGENOM" id="CLU_014689_8_2_6"/>
<dbReference type="Proteomes" id="UP000000225">
    <property type="component" value="Chromosome"/>
</dbReference>
<dbReference type="GO" id="GO:0051539">
    <property type="term" value="F:4 iron, 4 sulfur cluster binding"/>
    <property type="evidence" value="ECO:0007669"/>
    <property type="project" value="UniProtKB-KW"/>
</dbReference>
<dbReference type="GO" id="GO:0005506">
    <property type="term" value="F:iron ion binding"/>
    <property type="evidence" value="ECO:0007669"/>
    <property type="project" value="UniProtKB-UniRule"/>
</dbReference>
<dbReference type="GO" id="GO:0003723">
    <property type="term" value="F:RNA binding"/>
    <property type="evidence" value="ECO:0007669"/>
    <property type="project" value="InterPro"/>
</dbReference>
<dbReference type="GO" id="GO:0070041">
    <property type="term" value="F:rRNA (uridine-C5-)-methyltransferase activity"/>
    <property type="evidence" value="ECO:0007669"/>
    <property type="project" value="UniProtKB-UniRule"/>
</dbReference>
<dbReference type="GO" id="GO:0070475">
    <property type="term" value="P:rRNA base methylation"/>
    <property type="evidence" value="ECO:0007669"/>
    <property type="project" value="TreeGrafter"/>
</dbReference>
<dbReference type="CDD" id="cd02440">
    <property type="entry name" value="AdoMet_MTases"/>
    <property type="match status" value="1"/>
</dbReference>
<dbReference type="FunFam" id="3.40.50.150:FF:000009">
    <property type="entry name" value="23S rRNA (Uracil(1939)-C(5))-methyltransferase RlmD"/>
    <property type="match status" value="1"/>
</dbReference>
<dbReference type="FunFam" id="2.40.50.140:FF:000097">
    <property type="entry name" value="23S rRNA (uracil(1939)-C(5))-methyltransferase RlmD"/>
    <property type="match status" value="1"/>
</dbReference>
<dbReference type="Gene3D" id="2.40.50.1070">
    <property type="match status" value="1"/>
</dbReference>
<dbReference type="Gene3D" id="2.40.50.140">
    <property type="entry name" value="Nucleic acid-binding proteins"/>
    <property type="match status" value="1"/>
</dbReference>
<dbReference type="Gene3D" id="3.40.50.150">
    <property type="entry name" value="Vaccinia Virus protein VP39"/>
    <property type="match status" value="1"/>
</dbReference>
<dbReference type="HAMAP" id="MF_01010">
    <property type="entry name" value="23SrRNA_methyltr_RlmD"/>
    <property type="match status" value="1"/>
</dbReference>
<dbReference type="InterPro" id="IPR001566">
    <property type="entry name" value="23S_rRNA_MeTrfase_RlmD"/>
</dbReference>
<dbReference type="InterPro" id="IPR030390">
    <property type="entry name" value="MeTrfase_TrmA_AS"/>
</dbReference>
<dbReference type="InterPro" id="IPR030391">
    <property type="entry name" value="MeTrfase_TrmA_CS"/>
</dbReference>
<dbReference type="InterPro" id="IPR012340">
    <property type="entry name" value="NA-bd_OB-fold"/>
</dbReference>
<dbReference type="InterPro" id="IPR029063">
    <property type="entry name" value="SAM-dependent_MTases_sf"/>
</dbReference>
<dbReference type="InterPro" id="IPR002792">
    <property type="entry name" value="TRAM_dom"/>
</dbReference>
<dbReference type="InterPro" id="IPR010280">
    <property type="entry name" value="U5_MeTrfase_fam"/>
</dbReference>
<dbReference type="NCBIfam" id="NF009639">
    <property type="entry name" value="PRK13168.1"/>
    <property type="match status" value="1"/>
</dbReference>
<dbReference type="NCBIfam" id="TIGR00479">
    <property type="entry name" value="rumA"/>
    <property type="match status" value="1"/>
</dbReference>
<dbReference type="PANTHER" id="PTHR11061:SF49">
    <property type="entry name" value="23S RRNA (URACIL(1939)-C(5))-METHYLTRANSFERASE RLMD"/>
    <property type="match status" value="1"/>
</dbReference>
<dbReference type="PANTHER" id="PTHR11061">
    <property type="entry name" value="RNA M5U METHYLTRANSFERASE"/>
    <property type="match status" value="1"/>
</dbReference>
<dbReference type="Pfam" id="PF01938">
    <property type="entry name" value="TRAM"/>
    <property type="match status" value="1"/>
</dbReference>
<dbReference type="Pfam" id="PF05958">
    <property type="entry name" value="tRNA_U5-meth_tr"/>
    <property type="match status" value="1"/>
</dbReference>
<dbReference type="SUPFAM" id="SSF50249">
    <property type="entry name" value="Nucleic acid-binding proteins"/>
    <property type="match status" value="1"/>
</dbReference>
<dbReference type="SUPFAM" id="SSF53335">
    <property type="entry name" value="S-adenosyl-L-methionine-dependent methyltransferases"/>
    <property type="match status" value="1"/>
</dbReference>
<dbReference type="PROSITE" id="PS51687">
    <property type="entry name" value="SAM_MT_RNA_M5U"/>
    <property type="match status" value="1"/>
</dbReference>
<dbReference type="PROSITE" id="PS50926">
    <property type="entry name" value="TRAM"/>
    <property type="match status" value="1"/>
</dbReference>
<dbReference type="PROSITE" id="PS01230">
    <property type="entry name" value="TRMA_1"/>
    <property type="match status" value="1"/>
</dbReference>
<dbReference type="PROSITE" id="PS01231">
    <property type="entry name" value="TRMA_2"/>
    <property type="match status" value="1"/>
</dbReference>
<proteinExistence type="inferred from homology"/>
<name>RLMD_AERS4</name>
<keyword id="KW-0004">4Fe-4S</keyword>
<keyword id="KW-0408">Iron</keyword>
<keyword id="KW-0411">Iron-sulfur</keyword>
<keyword id="KW-0479">Metal-binding</keyword>
<keyword id="KW-0489">Methyltransferase</keyword>
<keyword id="KW-0698">rRNA processing</keyword>
<keyword id="KW-0949">S-adenosyl-L-methionine</keyword>
<keyword id="KW-0808">Transferase</keyword>
<comment type="function">
    <text evidence="1">Catalyzes the formation of 5-methyl-uridine at position 1939 (m5U1939) in 23S rRNA.</text>
</comment>
<comment type="catalytic activity">
    <reaction evidence="1">
        <text>uridine(1939) in 23S rRNA + S-adenosyl-L-methionine = 5-methyluridine(1939) in 23S rRNA + S-adenosyl-L-homocysteine + H(+)</text>
        <dbReference type="Rhea" id="RHEA:42908"/>
        <dbReference type="Rhea" id="RHEA-COMP:10278"/>
        <dbReference type="Rhea" id="RHEA-COMP:10279"/>
        <dbReference type="ChEBI" id="CHEBI:15378"/>
        <dbReference type="ChEBI" id="CHEBI:57856"/>
        <dbReference type="ChEBI" id="CHEBI:59789"/>
        <dbReference type="ChEBI" id="CHEBI:65315"/>
        <dbReference type="ChEBI" id="CHEBI:74447"/>
        <dbReference type="EC" id="2.1.1.190"/>
    </reaction>
</comment>
<comment type="similarity">
    <text evidence="1">Belongs to the class I-like SAM-binding methyltransferase superfamily. RNA M5U methyltransferase family. RlmD subfamily.</text>
</comment>
<sequence>MAQFFKPQKKSTQPQRIEFTVDSLDHHCVGIGRHQGKAIFIEGALPGEQVKARILDDKKQYAHAALQQVVTPAANRIAPFCNHYRECGGCNAQHLGEADQQAAKEAGLVSLFERLGQIKAPVLEPVLTGESRAYRRVCRLAIKFDKNGRCTRVGFRRRQSNDLVEIEGCPVLAEPLSALIAPLRECLNRLKSQRELGHAELIQAEQGIMMLLRHTGRPNEADRALLVAFAKSQGIDLYLQAADERIEPLHQVFQPSYSLDGLSLAFAPGDFIQVNGPINQSMVAQALAWLGASKDDKVLDLFCGIGNFTLPLARQAREVVGVEGDLAMVARAEENARRNGIDNARFYKADLSGDIVGMSWAREGFDLVLLDPARPGALEVMGHVVKLSPKRVVYVSCNPVTLARDSQVLVKGGYRLVRLGMLDMFPHTGHLESMALFEQ</sequence>
<gene>
    <name evidence="1" type="primary">rlmD</name>
    <name type="synonym">rumA</name>
    <name type="ordered locus">ASA_3479</name>
</gene>
<evidence type="ECO:0000255" key="1">
    <source>
        <dbReference type="HAMAP-Rule" id="MF_01010"/>
    </source>
</evidence>
<accession>A4SRC5</accession>
<organism>
    <name type="scientific">Aeromonas salmonicida (strain A449)</name>
    <dbReference type="NCBI Taxonomy" id="382245"/>
    <lineage>
        <taxon>Bacteria</taxon>
        <taxon>Pseudomonadati</taxon>
        <taxon>Pseudomonadota</taxon>
        <taxon>Gammaproteobacteria</taxon>
        <taxon>Aeromonadales</taxon>
        <taxon>Aeromonadaceae</taxon>
        <taxon>Aeromonas</taxon>
    </lineage>
</organism>
<feature type="chain" id="PRO_1000084033" description="23S rRNA (uracil(1939)-C(5))-methyltransferase RlmD">
    <location>
        <begin position="1"/>
        <end position="439"/>
    </location>
</feature>
<feature type="domain" description="TRAM" evidence="1">
    <location>
        <begin position="10"/>
        <end position="68"/>
    </location>
</feature>
<feature type="active site" description="Nucleophile" evidence="1">
    <location>
        <position position="397"/>
    </location>
</feature>
<feature type="binding site" evidence="1">
    <location>
        <position position="81"/>
    </location>
    <ligand>
        <name>[4Fe-4S] cluster</name>
        <dbReference type="ChEBI" id="CHEBI:49883"/>
    </ligand>
</feature>
<feature type="binding site" evidence="1">
    <location>
        <position position="87"/>
    </location>
    <ligand>
        <name>[4Fe-4S] cluster</name>
        <dbReference type="ChEBI" id="CHEBI:49883"/>
    </ligand>
</feature>
<feature type="binding site" evidence="1">
    <location>
        <position position="90"/>
    </location>
    <ligand>
        <name>[4Fe-4S] cluster</name>
        <dbReference type="ChEBI" id="CHEBI:49883"/>
    </ligand>
</feature>
<feature type="binding site" evidence="1">
    <location>
        <position position="169"/>
    </location>
    <ligand>
        <name>[4Fe-4S] cluster</name>
        <dbReference type="ChEBI" id="CHEBI:49883"/>
    </ligand>
</feature>
<feature type="binding site" evidence="1">
    <location>
        <position position="273"/>
    </location>
    <ligand>
        <name>S-adenosyl-L-methionine</name>
        <dbReference type="ChEBI" id="CHEBI:59789"/>
    </ligand>
</feature>
<feature type="binding site" evidence="1">
    <location>
        <position position="302"/>
    </location>
    <ligand>
        <name>S-adenosyl-L-methionine</name>
        <dbReference type="ChEBI" id="CHEBI:59789"/>
    </ligand>
</feature>
<feature type="binding site" evidence="1">
    <location>
        <position position="307"/>
    </location>
    <ligand>
        <name>S-adenosyl-L-methionine</name>
        <dbReference type="ChEBI" id="CHEBI:59789"/>
    </ligand>
</feature>
<feature type="binding site" evidence="1">
    <location>
        <position position="323"/>
    </location>
    <ligand>
        <name>S-adenosyl-L-methionine</name>
        <dbReference type="ChEBI" id="CHEBI:59789"/>
    </ligand>
</feature>
<feature type="binding site" evidence="1">
    <location>
        <position position="350"/>
    </location>
    <ligand>
        <name>S-adenosyl-L-methionine</name>
        <dbReference type="ChEBI" id="CHEBI:59789"/>
    </ligand>
</feature>
<feature type="binding site" evidence="1">
    <location>
        <position position="371"/>
    </location>
    <ligand>
        <name>S-adenosyl-L-methionine</name>
        <dbReference type="ChEBI" id="CHEBI:59789"/>
    </ligand>
</feature>
<protein>
    <recommendedName>
        <fullName evidence="1">23S rRNA (uracil(1939)-C(5))-methyltransferase RlmD</fullName>
        <ecNumber evidence="1">2.1.1.190</ecNumber>
    </recommendedName>
    <alternativeName>
        <fullName evidence="1">23S rRNA(m5U1939)-methyltransferase</fullName>
    </alternativeName>
</protein>